<evidence type="ECO:0000255" key="1">
    <source>
        <dbReference type="HAMAP-Rule" id="MF_04018"/>
    </source>
</evidence>
<sequence length="338" mass="37509">MKTKEVTPRGDSGEKLARDLLRLVPPQTHKLGTFRASELGRDLRAIVANYAPKTISGHIQIFRDDFIAPPYRQPLYGEFLVHAKTFHPQEPRGTFVFAFSVGDGPECTSVDTIFSPVSLFRVCGLGADAAPHTHRISHIWYESESDFLNVAANVRELIENCSLHKFLSPVGPLVQNIQSTFLNKITTVVKGEVLSNRSPPENIKLVLPSDLFFDMDETCPYPPSGDPVKPRVCYYVCILYVMVNNIPSASLQFFRTGKGASDVVFFLRRYYSDAIANKITVLGDNLDINNLTLGAVCMLGYSSSQSTPGRGNLHFRSYSLPTVEVSDFVAQPGSWTLI</sequence>
<comment type="function">
    <text evidence="1">Structural component of the T=16 icosahedral capsid. The capsid is composed of pentamers and hexamers of major capsid protein/MCP, which are linked together by heterotrimers called triplexes. These triplexes are formed by a single molecule of triplex protein 1/TRX1 and two copies of triplex protein 2/TRX2. Additionally, TRX1 is required for efficient transport of TRX2 to the nucleus, which is the site of capsid assembly.</text>
</comment>
<comment type="subunit">
    <text evidence="1">Interacts with TRX2, MCP and capsid vertex component 2/CVC2.</text>
</comment>
<comment type="subcellular location">
    <subcellularLocation>
        <location evidence="1">Virion</location>
    </subcellularLocation>
    <subcellularLocation>
        <location evidence="1">Host nucleus</location>
    </subcellularLocation>
</comment>
<comment type="similarity">
    <text evidence="1">Belongs to the herpesviridae TRX1 protein family.</text>
</comment>
<accession>Q66664</accession>
<gene>
    <name evidence="1" type="primary">TRX1</name>
    <name type="ordered locus">62</name>
</gene>
<dbReference type="EMBL" id="U20824">
    <property type="protein sequence ID" value="AAC13850.1"/>
    <property type="molecule type" value="Genomic_DNA"/>
</dbReference>
<dbReference type="PIR" id="S55657">
    <property type="entry name" value="S55657"/>
</dbReference>
<dbReference type="SMR" id="Q66664"/>
<dbReference type="KEGG" id="vg:1461038"/>
<dbReference type="Proteomes" id="UP000007083">
    <property type="component" value="Segment"/>
</dbReference>
<dbReference type="GO" id="GO:0042025">
    <property type="term" value="C:host cell nucleus"/>
    <property type="evidence" value="ECO:0007669"/>
    <property type="project" value="UniProtKB-SubCell"/>
</dbReference>
<dbReference type="GO" id="GO:0019028">
    <property type="term" value="C:viral capsid"/>
    <property type="evidence" value="ECO:0007669"/>
    <property type="project" value="UniProtKB-KW"/>
</dbReference>
<dbReference type="GO" id="GO:0003677">
    <property type="term" value="F:DNA binding"/>
    <property type="evidence" value="ECO:0007669"/>
    <property type="project" value="InterPro"/>
</dbReference>
<dbReference type="GO" id="GO:0019069">
    <property type="term" value="P:viral capsid assembly"/>
    <property type="evidence" value="ECO:0007669"/>
    <property type="project" value="InterPro"/>
</dbReference>
<dbReference type="HAMAP" id="MF_04018">
    <property type="entry name" value="HSV_TRX1"/>
    <property type="match status" value="1"/>
</dbReference>
<dbReference type="InterPro" id="IPR004999">
    <property type="entry name" value="Herpes_1"/>
</dbReference>
<dbReference type="Pfam" id="PF03327">
    <property type="entry name" value="Herpes_VP19C"/>
    <property type="match status" value="1"/>
</dbReference>
<protein>
    <recommendedName>
        <fullName evidence="1">Triplex capsid protein 1</fullName>
    </recommendedName>
</protein>
<keyword id="KW-0167">Capsid protein</keyword>
<keyword id="KW-1048">Host nucleus</keyword>
<keyword id="KW-1185">Reference proteome</keyword>
<keyword id="KW-0946">Virion</keyword>
<proteinExistence type="inferred from homology"/>
<feature type="chain" id="PRO_0000406042" description="Triplex capsid protein 1">
    <location>
        <begin position="1"/>
        <end position="338"/>
    </location>
</feature>
<name>TRX1_EHV2</name>
<organism>
    <name type="scientific">Equine herpesvirus 2 (strain 86/87)</name>
    <name type="common">EHV-2</name>
    <dbReference type="NCBI Taxonomy" id="82831"/>
    <lineage>
        <taxon>Viruses</taxon>
        <taxon>Duplodnaviria</taxon>
        <taxon>Heunggongvirae</taxon>
        <taxon>Peploviricota</taxon>
        <taxon>Herviviricetes</taxon>
        <taxon>Herpesvirales</taxon>
        <taxon>Orthoherpesviridae</taxon>
        <taxon>Gammaherpesvirinae</taxon>
        <taxon>Percavirus</taxon>
        <taxon>Percavirus equidgamma2</taxon>
        <taxon>Equid gammaherpesvirus 2</taxon>
    </lineage>
</organism>
<organismHost>
    <name type="scientific">Equus caballus</name>
    <name type="common">Horse</name>
    <dbReference type="NCBI Taxonomy" id="9796"/>
</organismHost>
<reference key="1">
    <citation type="journal article" date="1995" name="J. Mol. Biol.">
        <title>The DNA sequence of equine herpesvirus 2.</title>
        <authorList>
            <person name="Telford E.A.R."/>
            <person name="Watson M.S."/>
            <person name="Aird H.C."/>
            <person name="Perry J."/>
            <person name="Davison A.J."/>
        </authorList>
    </citation>
    <scope>NUCLEOTIDE SEQUENCE [LARGE SCALE GENOMIC DNA]</scope>
</reference>